<accession>Q5NFT3</accession>
<keyword id="KW-0963">Cytoplasm</keyword>
<keyword id="KW-0350">Heme biosynthesis</keyword>
<keyword id="KW-0408">Iron</keyword>
<keyword id="KW-0456">Lyase</keyword>
<keyword id="KW-0479">Metal-binding</keyword>
<keyword id="KW-0627">Porphyrin biosynthesis</keyword>
<keyword id="KW-1185">Reference proteome</keyword>
<feature type="chain" id="PRO_0000175143" description="Ferrochelatase">
    <location>
        <begin position="1"/>
        <end position="333"/>
    </location>
</feature>
<feature type="binding site" evidence="1">
    <location>
        <position position="202"/>
    </location>
    <ligand>
        <name>Fe cation</name>
        <dbReference type="ChEBI" id="CHEBI:24875"/>
    </ligand>
</feature>
<feature type="binding site" evidence="1">
    <location>
        <position position="284"/>
    </location>
    <ligand>
        <name>Fe cation</name>
        <dbReference type="ChEBI" id="CHEBI:24875"/>
    </ligand>
</feature>
<sequence length="333" mass="39066">MQQYSCKYNKQAILLVNLGTPDNYDTKSIKRYLKEFLSDPRVIEANPVLWKIILNLIILPIRAKKNVHTYKTVWNKQHNKSPLLFYTENLADKLDKKLDNYIVDYAMRYGNPSIESKIKSLQDQGATEIIIFPLYPQYSATTTATVYDEVYRVLSKLRWQPTIKGINPYYDNKFHIQTISQQIKEHLKKLDSTPDTVLFSFHGLPKEYFDKGDPYYCHCYKTYRLVKEELQNEYPNIDFELSFQSRFGPKKWLEPYTTVKLEEFTKQNKSVVVIAPGFSADCLETLEELAISEKENFIKKGGKEFSLIPCLNDSNQHVDMLYNIIDEEICLKK</sequence>
<organism>
    <name type="scientific">Francisella tularensis subsp. tularensis (strain SCHU S4 / Schu 4)</name>
    <dbReference type="NCBI Taxonomy" id="177416"/>
    <lineage>
        <taxon>Bacteria</taxon>
        <taxon>Pseudomonadati</taxon>
        <taxon>Pseudomonadota</taxon>
        <taxon>Gammaproteobacteria</taxon>
        <taxon>Thiotrichales</taxon>
        <taxon>Francisellaceae</taxon>
        <taxon>Francisella</taxon>
    </lineage>
</organism>
<proteinExistence type="inferred from homology"/>
<evidence type="ECO:0000255" key="1">
    <source>
        <dbReference type="HAMAP-Rule" id="MF_00323"/>
    </source>
</evidence>
<dbReference type="EC" id="4.98.1.1" evidence="1"/>
<dbReference type="EMBL" id="AJ749949">
    <property type="protein sequence ID" value="CAG45771.1"/>
    <property type="molecule type" value="Genomic_DNA"/>
</dbReference>
<dbReference type="RefSeq" id="WP_003021335.1">
    <property type="nucleotide sequence ID" value="NC_006570.2"/>
</dbReference>
<dbReference type="RefSeq" id="YP_170109.1">
    <property type="nucleotide sequence ID" value="NC_006570.2"/>
</dbReference>
<dbReference type="SMR" id="Q5NFT3"/>
<dbReference type="STRING" id="177416.FTT_1138"/>
<dbReference type="DNASU" id="3192420"/>
<dbReference type="EnsemblBacteria" id="CAG45771">
    <property type="protein sequence ID" value="CAG45771"/>
    <property type="gene ID" value="FTT_1138"/>
</dbReference>
<dbReference type="KEGG" id="ftu:FTT_1138"/>
<dbReference type="eggNOG" id="COG0276">
    <property type="taxonomic scope" value="Bacteria"/>
</dbReference>
<dbReference type="OrthoDB" id="9809741at2"/>
<dbReference type="UniPathway" id="UPA00252">
    <property type="reaction ID" value="UER00325"/>
</dbReference>
<dbReference type="PHI-base" id="PHI:4734"/>
<dbReference type="Proteomes" id="UP000001174">
    <property type="component" value="Chromosome"/>
</dbReference>
<dbReference type="GO" id="GO:0005737">
    <property type="term" value="C:cytoplasm"/>
    <property type="evidence" value="ECO:0007669"/>
    <property type="project" value="UniProtKB-SubCell"/>
</dbReference>
<dbReference type="GO" id="GO:0004325">
    <property type="term" value="F:ferrochelatase activity"/>
    <property type="evidence" value="ECO:0007669"/>
    <property type="project" value="UniProtKB-UniRule"/>
</dbReference>
<dbReference type="GO" id="GO:0046872">
    <property type="term" value="F:metal ion binding"/>
    <property type="evidence" value="ECO:0007669"/>
    <property type="project" value="UniProtKB-KW"/>
</dbReference>
<dbReference type="GO" id="GO:0006783">
    <property type="term" value="P:heme biosynthetic process"/>
    <property type="evidence" value="ECO:0007669"/>
    <property type="project" value="UniProtKB-UniRule"/>
</dbReference>
<dbReference type="CDD" id="cd00419">
    <property type="entry name" value="Ferrochelatase_C"/>
    <property type="match status" value="1"/>
</dbReference>
<dbReference type="CDD" id="cd03411">
    <property type="entry name" value="Ferrochelatase_N"/>
    <property type="match status" value="1"/>
</dbReference>
<dbReference type="FunFam" id="3.40.50.1400:FF:000002">
    <property type="entry name" value="Ferrochelatase"/>
    <property type="match status" value="1"/>
</dbReference>
<dbReference type="Gene3D" id="3.40.50.1400">
    <property type="match status" value="2"/>
</dbReference>
<dbReference type="HAMAP" id="MF_00323">
    <property type="entry name" value="Ferrochelatase"/>
    <property type="match status" value="1"/>
</dbReference>
<dbReference type="InterPro" id="IPR001015">
    <property type="entry name" value="Ferrochelatase"/>
</dbReference>
<dbReference type="InterPro" id="IPR019772">
    <property type="entry name" value="Ferrochelatase_AS"/>
</dbReference>
<dbReference type="InterPro" id="IPR033644">
    <property type="entry name" value="Ferrochelatase_C"/>
</dbReference>
<dbReference type="InterPro" id="IPR033659">
    <property type="entry name" value="Ferrochelatase_N"/>
</dbReference>
<dbReference type="NCBIfam" id="TIGR00109">
    <property type="entry name" value="hemH"/>
    <property type="match status" value="1"/>
</dbReference>
<dbReference type="PANTHER" id="PTHR11108">
    <property type="entry name" value="FERROCHELATASE"/>
    <property type="match status" value="1"/>
</dbReference>
<dbReference type="PANTHER" id="PTHR11108:SF1">
    <property type="entry name" value="FERROCHELATASE, MITOCHONDRIAL"/>
    <property type="match status" value="1"/>
</dbReference>
<dbReference type="Pfam" id="PF00762">
    <property type="entry name" value="Ferrochelatase"/>
    <property type="match status" value="1"/>
</dbReference>
<dbReference type="SUPFAM" id="SSF53800">
    <property type="entry name" value="Chelatase"/>
    <property type="match status" value="1"/>
</dbReference>
<dbReference type="PROSITE" id="PS00534">
    <property type="entry name" value="FERROCHELATASE"/>
    <property type="match status" value="1"/>
</dbReference>
<comment type="function">
    <text evidence="1">Catalyzes the ferrous insertion into protoporphyrin IX.</text>
</comment>
<comment type="catalytic activity">
    <reaction evidence="1">
        <text>heme b + 2 H(+) = protoporphyrin IX + Fe(2+)</text>
        <dbReference type="Rhea" id="RHEA:22584"/>
        <dbReference type="ChEBI" id="CHEBI:15378"/>
        <dbReference type="ChEBI" id="CHEBI:29033"/>
        <dbReference type="ChEBI" id="CHEBI:57306"/>
        <dbReference type="ChEBI" id="CHEBI:60344"/>
        <dbReference type="EC" id="4.98.1.1"/>
    </reaction>
</comment>
<comment type="pathway">
    <text evidence="1">Porphyrin-containing compound metabolism; protoheme biosynthesis; protoheme from protoporphyrin-IX: step 1/1.</text>
</comment>
<comment type="subcellular location">
    <subcellularLocation>
        <location evidence="1">Cytoplasm</location>
    </subcellularLocation>
</comment>
<comment type="similarity">
    <text evidence="1">Belongs to the ferrochelatase family.</text>
</comment>
<reference key="1">
    <citation type="journal article" date="2005" name="Nat. Genet.">
        <title>The complete genome sequence of Francisella tularensis, the causative agent of tularemia.</title>
        <authorList>
            <person name="Larsson P."/>
            <person name="Oyston P.C.F."/>
            <person name="Chain P."/>
            <person name="Chu M.C."/>
            <person name="Duffield M."/>
            <person name="Fuxelius H.-H."/>
            <person name="Garcia E."/>
            <person name="Haelltorp G."/>
            <person name="Johansson D."/>
            <person name="Isherwood K.E."/>
            <person name="Karp P.D."/>
            <person name="Larsson E."/>
            <person name="Liu Y."/>
            <person name="Michell S."/>
            <person name="Prior J."/>
            <person name="Prior R."/>
            <person name="Malfatti S."/>
            <person name="Sjoestedt A."/>
            <person name="Svensson K."/>
            <person name="Thompson N."/>
            <person name="Vergez L."/>
            <person name="Wagg J.K."/>
            <person name="Wren B.W."/>
            <person name="Lindler L.E."/>
            <person name="Andersson S.G.E."/>
            <person name="Forsman M."/>
            <person name="Titball R.W."/>
        </authorList>
    </citation>
    <scope>NUCLEOTIDE SEQUENCE [LARGE SCALE GENOMIC DNA]</scope>
    <source>
        <strain>SCHU S4 / Schu 4</strain>
    </source>
</reference>
<gene>
    <name evidence="1" type="primary">hemH</name>
    <name type="ordered locus">FTT_1138</name>
</gene>
<name>HEMH_FRATT</name>
<protein>
    <recommendedName>
        <fullName evidence="1">Ferrochelatase</fullName>
        <ecNumber evidence="1">4.98.1.1</ecNumber>
    </recommendedName>
    <alternativeName>
        <fullName evidence="1">Heme synthase</fullName>
    </alternativeName>
    <alternativeName>
        <fullName evidence="1">Protoheme ferro-lyase</fullName>
    </alternativeName>
</protein>